<gene>
    <name type="primary">C1RL</name>
    <name type="synonym">C1RL1</name>
    <name type="synonym">C1RLP</name>
    <name type="synonym">CLSPA</name>
</gene>
<evidence type="ECO:0000250" key="1"/>
<evidence type="ECO:0000255" key="2"/>
<evidence type="ECO:0000255" key="3">
    <source>
        <dbReference type="PROSITE-ProRule" id="PRU00059"/>
    </source>
</evidence>
<evidence type="ECO:0000255" key="4">
    <source>
        <dbReference type="PROSITE-ProRule" id="PRU00274"/>
    </source>
</evidence>
<evidence type="ECO:0000255" key="5">
    <source>
        <dbReference type="PROSITE-ProRule" id="PRU00302"/>
    </source>
</evidence>
<evidence type="ECO:0000269" key="6">
    <source>
    </source>
</evidence>
<evidence type="ECO:0000269" key="7">
    <source>
    </source>
</evidence>
<evidence type="ECO:0000269" key="8">
    <source>
    </source>
</evidence>
<evidence type="ECO:0000269" key="9">
    <source>
    </source>
</evidence>
<evidence type="ECO:0000269" key="10">
    <source>
    </source>
</evidence>
<evidence type="ECO:0000269" key="11">
    <source>
    </source>
</evidence>
<evidence type="ECO:0000305" key="12"/>
<accession>Q9NZP8</accession>
<accession>Q53GX9</accession>
<name>C1RL_HUMAN</name>
<sequence>MPGPRVWGKYLWRSPHSKGCPGAMWWLLLWGVLQACPTRGSVLLAQELPQQLTSPGYPEPYGKGQESSTDIKAPEGFAVRLVFQDFDLEPSQDCAGDSVTISFVGSDPSQFCGQQGSPLGRPPGQREFVSSGRSLRLTFRTQPSSENKTAHLHKGFLALYQTVAVNYSQPISEASRGSEAINAPGDNPAKVQNHCQEPYYQAAAAGALTCATPGTWKDRQDGEEVLQCMPVCGRPVTPIAQNQTTLGSSRAKLGNFPWQAFTSIHGRGGGALLGDRWILTAAHTIYPKDSVSLRKNQSVNVFLGHTAIDEMLKLGNHPVHRVVVHPDYRQNESHNFSGDIALLELQHSIPLGPNVLPVCLPDNETLYRSGLLGYVSGFGMEMGWLTTELKYSRLPVAPREACNAWLQKRQRPEVFSDNMFCVGDETQRHSVCQGDSGSVYVVWDNHAHHWVATGIVSWGIGCGEGYDFYTKVLSYVDWIKGVMNGKN</sequence>
<organism>
    <name type="scientific">Homo sapiens</name>
    <name type="common">Human</name>
    <dbReference type="NCBI Taxonomy" id="9606"/>
    <lineage>
        <taxon>Eukaryota</taxon>
        <taxon>Metazoa</taxon>
        <taxon>Chordata</taxon>
        <taxon>Craniata</taxon>
        <taxon>Vertebrata</taxon>
        <taxon>Euteleostomi</taxon>
        <taxon>Mammalia</taxon>
        <taxon>Eutheria</taxon>
        <taxon>Euarchontoglires</taxon>
        <taxon>Primates</taxon>
        <taxon>Haplorrhini</taxon>
        <taxon>Catarrhini</taxon>
        <taxon>Hominidae</taxon>
        <taxon>Homo</taxon>
    </lineage>
</organism>
<reference key="1">
    <citation type="journal article" date="2004" name="Biochem. Biophys. Res. Commun.">
        <title>A novel human dendritic cell-derived C1r-like serine protease analog inhibits complement-mediated cytotoxicity.</title>
        <authorList>
            <person name="Lin N."/>
            <person name="Liu S."/>
            <person name="Li N."/>
            <person name="Wu P."/>
            <person name="An H."/>
            <person name="Yu Y."/>
            <person name="Wan T."/>
            <person name="Cao X."/>
        </authorList>
    </citation>
    <scope>NUCLEOTIDE SEQUENCE [MRNA]</scope>
    <scope>FUNCTION</scope>
    <scope>SUBCELLULAR LOCATION</scope>
    <scope>TISSUE SPECIFICITY</scope>
    <scope>INDUCTION</scope>
    <scope>VARIANT VAL-285</scope>
    <source>
        <tissue>Dendritic cell</tissue>
    </source>
</reference>
<reference key="2">
    <citation type="journal article" date="2005" name="Biochem. J.">
        <title>A novel human complement-related protein, C1r-like protease (C1r-LP), specifically cleaves pro-C1s.</title>
        <authorList>
            <person name="Ligoudistianou C."/>
            <person name="Xu Y."/>
            <person name="Garnier G."/>
            <person name="Circolo A."/>
            <person name="Volanakis J.E."/>
        </authorList>
    </citation>
    <scope>NUCLEOTIDE SEQUENCE [MRNA]</scope>
    <scope>FUNCTION</scope>
    <scope>TISSUE SPECIFICITY</scope>
</reference>
<reference key="3">
    <citation type="submission" date="2005-04" db="EMBL/GenBank/DDBJ databases">
        <authorList>
            <person name="Suzuki Y."/>
            <person name="Sugano S."/>
            <person name="Totoki Y."/>
            <person name="Toyoda A."/>
            <person name="Takeda T."/>
            <person name="Sakaki Y."/>
            <person name="Tanaka A."/>
            <person name="Yokoyama S."/>
        </authorList>
    </citation>
    <scope>NUCLEOTIDE SEQUENCE [LARGE SCALE MRNA]</scope>
    <source>
        <tissue>Liver</tissue>
    </source>
</reference>
<reference key="4">
    <citation type="journal article" date="2006" name="Nature">
        <title>The finished DNA sequence of human chromosome 12.</title>
        <authorList>
            <person name="Scherer S.E."/>
            <person name="Muzny D.M."/>
            <person name="Buhay C.J."/>
            <person name="Chen R."/>
            <person name="Cree A."/>
            <person name="Ding Y."/>
            <person name="Dugan-Rocha S."/>
            <person name="Gill R."/>
            <person name="Gunaratne P."/>
            <person name="Harris R.A."/>
            <person name="Hawes A.C."/>
            <person name="Hernandez J."/>
            <person name="Hodgson A.V."/>
            <person name="Hume J."/>
            <person name="Jackson A."/>
            <person name="Khan Z.M."/>
            <person name="Kovar-Smith C."/>
            <person name="Lewis L.R."/>
            <person name="Lozado R.J."/>
            <person name="Metzker M.L."/>
            <person name="Milosavljevic A."/>
            <person name="Miner G.R."/>
            <person name="Montgomery K.T."/>
            <person name="Morgan M.B."/>
            <person name="Nazareth L.V."/>
            <person name="Scott G."/>
            <person name="Sodergren E."/>
            <person name="Song X.-Z."/>
            <person name="Steffen D."/>
            <person name="Lovering R.C."/>
            <person name="Wheeler D.A."/>
            <person name="Worley K.C."/>
            <person name="Yuan Y."/>
            <person name="Zhang Z."/>
            <person name="Adams C.Q."/>
            <person name="Ansari-Lari M.A."/>
            <person name="Ayele M."/>
            <person name="Brown M.J."/>
            <person name="Chen G."/>
            <person name="Chen Z."/>
            <person name="Clerc-Blankenburg K.P."/>
            <person name="Davis C."/>
            <person name="Delgado O."/>
            <person name="Dinh H.H."/>
            <person name="Draper H."/>
            <person name="Gonzalez-Garay M.L."/>
            <person name="Havlak P."/>
            <person name="Jackson L.R."/>
            <person name="Jacob L.S."/>
            <person name="Kelly S.H."/>
            <person name="Li L."/>
            <person name="Li Z."/>
            <person name="Liu J."/>
            <person name="Liu W."/>
            <person name="Lu J."/>
            <person name="Maheshwari M."/>
            <person name="Nguyen B.-V."/>
            <person name="Okwuonu G.O."/>
            <person name="Pasternak S."/>
            <person name="Perez L.M."/>
            <person name="Plopper F.J.H."/>
            <person name="Santibanez J."/>
            <person name="Shen H."/>
            <person name="Tabor P.E."/>
            <person name="Verduzco D."/>
            <person name="Waldron L."/>
            <person name="Wang Q."/>
            <person name="Williams G.A."/>
            <person name="Zhang J."/>
            <person name="Zhou J."/>
            <person name="Allen C.C."/>
            <person name="Amin A.G."/>
            <person name="Anyalebechi V."/>
            <person name="Bailey M."/>
            <person name="Barbaria J.A."/>
            <person name="Bimage K.E."/>
            <person name="Bryant N.P."/>
            <person name="Burch P.E."/>
            <person name="Burkett C.E."/>
            <person name="Burrell K.L."/>
            <person name="Calderon E."/>
            <person name="Cardenas V."/>
            <person name="Carter K."/>
            <person name="Casias K."/>
            <person name="Cavazos I."/>
            <person name="Cavazos S.R."/>
            <person name="Ceasar H."/>
            <person name="Chacko J."/>
            <person name="Chan S.N."/>
            <person name="Chavez D."/>
            <person name="Christopoulos C."/>
            <person name="Chu J."/>
            <person name="Cockrell R."/>
            <person name="Cox C.D."/>
            <person name="Dang M."/>
            <person name="Dathorne S.R."/>
            <person name="David R."/>
            <person name="Davis C.M."/>
            <person name="Davy-Carroll L."/>
            <person name="Deshazo D.R."/>
            <person name="Donlin J.E."/>
            <person name="D'Souza L."/>
            <person name="Eaves K.A."/>
            <person name="Egan A."/>
            <person name="Emery-Cohen A.J."/>
            <person name="Escotto M."/>
            <person name="Flagg N."/>
            <person name="Forbes L.D."/>
            <person name="Gabisi A.M."/>
            <person name="Garza M."/>
            <person name="Hamilton C."/>
            <person name="Henderson N."/>
            <person name="Hernandez O."/>
            <person name="Hines S."/>
            <person name="Hogues M.E."/>
            <person name="Huang M."/>
            <person name="Idlebird D.G."/>
            <person name="Johnson R."/>
            <person name="Jolivet A."/>
            <person name="Jones S."/>
            <person name="Kagan R."/>
            <person name="King L.M."/>
            <person name="Leal B."/>
            <person name="Lebow H."/>
            <person name="Lee S."/>
            <person name="LeVan J.M."/>
            <person name="Lewis L.C."/>
            <person name="London P."/>
            <person name="Lorensuhewa L.M."/>
            <person name="Loulseged H."/>
            <person name="Lovett D.A."/>
            <person name="Lucier A."/>
            <person name="Lucier R.L."/>
            <person name="Ma J."/>
            <person name="Madu R.C."/>
            <person name="Mapua P."/>
            <person name="Martindale A.D."/>
            <person name="Martinez E."/>
            <person name="Massey E."/>
            <person name="Mawhiney S."/>
            <person name="Meador M.G."/>
            <person name="Mendez S."/>
            <person name="Mercado C."/>
            <person name="Mercado I.C."/>
            <person name="Merritt C.E."/>
            <person name="Miner Z.L."/>
            <person name="Minja E."/>
            <person name="Mitchell T."/>
            <person name="Mohabbat F."/>
            <person name="Mohabbat K."/>
            <person name="Montgomery B."/>
            <person name="Moore N."/>
            <person name="Morris S."/>
            <person name="Munidasa M."/>
            <person name="Ngo R.N."/>
            <person name="Nguyen N.B."/>
            <person name="Nickerson E."/>
            <person name="Nwaokelemeh O.O."/>
            <person name="Nwokenkwo S."/>
            <person name="Obregon M."/>
            <person name="Oguh M."/>
            <person name="Oragunye N."/>
            <person name="Oviedo R.J."/>
            <person name="Parish B.J."/>
            <person name="Parker D.N."/>
            <person name="Parrish J."/>
            <person name="Parks K.L."/>
            <person name="Paul H.A."/>
            <person name="Payton B.A."/>
            <person name="Perez A."/>
            <person name="Perrin W."/>
            <person name="Pickens A."/>
            <person name="Primus E.L."/>
            <person name="Pu L.-L."/>
            <person name="Puazo M."/>
            <person name="Quiles M.M."/>
            <person name="Quiroz J.B."/>
            <person name="Rabata D."/>
            <person name="Reeves K."/>
            <person name="Ruiz S.J."/>
            <person name="Shao H."/>
            <person name="Sisson I."/>
            <person name="Sonaike T."/>
            <person name="Sorelle R.P."/>
            <person name="Sutton A.E."/>
            <person name="Svatek A.F."/>
            <person name="Svetz L.A."/>
            <person name="Tamerisa K.S."/>
            <person name="Taylor T.R."/>
            <person name="Teague B."/>
            <person name="Thomas N."/>
            <person name="Thorn R.D."/>
            <person name="Trejos Z.Y."/>
            <person name="Trevino B.K."/>
            <person name="Ukegbu O.N."/>
            <person name="Urban J.B."/>
            <person name="Vasquez L.I."/>
            <person name="Vera V.A."/>
            <person name="Villasana D.M."/>
            <person name="Wang L."/>
            <person name="Ward-Moore S."/>
            <person name="Warren J.T."/>
            <person name="Wei X."/>
            <person name="White F."/>
            <person name="Williamson A.L."/>
            <person name="Wleczyk R."/>
            <person name="Wooden H.S."/>
            <person name="Wooden S.H."/>
            <person name="Yen J."/>
            <person name="Yoon L."/>
            <person name="Yoon V."/>
            <person name="Zorrilla S.E."/>
            <person name="Nelson D."/>
            <person name="Kucherlapati R."/>
            <person name="Weinstock G."/>
            <person name="Gibbs R.A."/>
        </authorList>
    </citation>
    <scope>NUCLEOTIDE SEQUENCE [LARGE SCALE GENOMIC DNA]</scope>
</reference>
<reference key="5">
    <citation type="journal article" date="2004" name="Proc. Natl. Acad. Sci. U.S.A.">
        <title>Prohaptoglobin is proteolytically cleaved in the endoplasmic reticulum by the complement C1r-like protein.</title>
        <authorList>
            <person name="Wicher K.B."/>
            <person name="Fries E."/>
        </authorList>
    </citation>
    <scope>FUNCTION</scope>
    <scope>MUTAGENESIS OF SER-436</scope>
</reference>
<reference key="6">
    <citation type="journal article" date="2005" name="J. Proteome Res.">
        <title>Human plasma N-glycoproteome analysis by immunoaffinity subtraction, hydrazide chemistry, and mass spectrometry.</title>
        <authorList>
            <person name="Liu T."/>
            <person name="Qian W.-J."/>
            <person name="Gritsenko M.A."/>
            <person name="Camp D.G. II"/>
            <person name="Monroe M.E."/>
            <person name="Moore R.J."/>
            <person name="Smith R.D."/>
        </authorList>
    </citation>
    <scope>GLYCOSYLATION [LARGE SCALE ANALYSIS] AT ASN-166; ASN-242 AND ASN-296</scope>
    <source>
        <tissue>Plasma</tissue>
    </source>
</reference>
<reference key="7">
    <citation type="journal article" date="2009" name="J. Proteome Res.">
        <title>Glycoproteomics analysis of human liver tissue by combination of multiple enzyme digestion and hydrazide chemistry.</title>
        <authorList>
            <person name="Chen R."/>
            <person name="Jiang X."/>
            <person name="Sun D."/>
            <person name="Han G."/>
            <person name="Wang F."/>
            <person name="Ye M."/>
            <person name="Wang L."/>
            <person name="Zou H."/>
        </authorList>
    </citation>
    <scope>GLYCOSYLATION [LARGE SCALE ANALYSIS] AT ASN-147; ASN-242 AND ASN-296</scope>
    <source>
        <tissue>Liver</tissue>
    </source>
</reference>
<reference key="8">
    <citation type="journal article" date="2009" name="Mol. Cell. Proteomics">
        <title>A strategy for precise and large scale identification of core fucosylated glycoproteins.</title>
        <authorList>
            <person name="Jia W."/>
            <person name="Lu Z."/>
            <person name="Fu Y."/>
            <person name="Wang H.P."/>
            <person name="Wang L.H."/>
            <person name="Chi H."/>
            <person name="Yuan Z.F."/>
            <person name="Zheng Z.B."/>
            <person name="Song L.N."/>
            <person name="Han H.H."/>
            <person name="Liang Y.M."/>
            <person name="Wang J.L."/>
            <person name="Cai Y."/>
            <person name="Zhang Y.K."/>
            <person name="Deng Y.L."/>
            <person name="Ying W.T."/>
            <person name="He S.M."/>
            <person name="Qian X.H."/>
        </authorList>
    </citation>
    <scope>GLYCOSYLATION AT ASN-242</scope>
</reference>
<dbReference type="EC" id="3.4.21.-"/>
<dbReference type="EMBL" id="AF178985">
    <property type="protein sequence ID" value="AAF44349.1"/>
    <property type="molecule type" value="mRNA"/>
</dbReference>
<dbReference type="EMBL" id="AK222802">
    <property type="protein sequence ID" value="BAD96522.1"/>
    <property type="molecule type" value="mRNA"/>
</dbReference>
<dbReference type="EMBL" id="AC018653">
    <property type="status" value="NOT_ANNOTATED_CDS"/>
    <property type="molecule type" value="Genomic_DNA"/>
</dbReference>
<dbReference type="EMBL" id="AC094008">
    <property type="status" value="NOT_ANNOTATED_CDS"/>
    <property type="molecule type" value="Genomic_DNA"/>
</dbReference>
<dbReference type="EMBL" id="AC233309">
    <property type="status" value="NOT_ANNOTATED_CDS"/>
    <property type="molecule type" value="Genomic_DNA"/>
</dbReference>
<dbReference type="CCDS" id="CCDS8573.1"/>
<dbReference type="RefSeq" id="NP_001284569.1">
    <property type="nucleotide sequence ID" value="NM_001297640.1"/>
</dbReference>
<dbReference type="RefSeq" id="NP_057630.2">
    <property type="nucleotide sequence ID" value="NM_016546.4"/>
</dbReference>
<dbReference type="SMR" id="Q9NZP8"/>
<dbReference type="BioGRID" id="119431">
    <property type="interactions" value="11"/>
</dbReference>
<dbReference type="FunCoup" id="Q9NZP8">
    <property type="interactions" value="178"/>
</dbReference>
<dbReference type="IntAct" id="Q9NZP8">
    <property type="interactions" value="5"/>
</dbReference>
<dbReference type="STRING" id="9606.ENSP00000266542"/>
<dbReference type="MEROPS" id="S01.189"/>
<dbReference type="GlyConnect" id="1143">
    <property type="glycosylation" value="11 N-Linked glycans (3 sites)"/>
</dbReference>
<dbReference type="GlyCosmos" id="Q9NZP8">
    <property type="glycosylation" value="6 sites, 14 glycans"/>
</dbReference>
<dbReference type="GlyGen" id="Q9NZP8">
    <property type="glycosylation" value="7 sites, 32 N-linked glycans (4 sites), 2 O-linked glycans (2 sites)"/>
</dbReference>
<dbReference type="iPTMnet" id="Q9NZP8"/>
<dbReference type="PhosphoSitePlus" id="Q9NZP8"/>
<dbReference type="BioMuta" id="C1RL"/>
<dbReference type="DMDM" id="182705204"/>
<dbReference type="CPTAC" id="non-CPTAC-1102"/>
<dbReference type="jPOST" id="Q9NZP8"/>
<dbReference type="MassIVE" id="Q9NZP8"/>
<dbReference type="PaxDb" id="9606-ENSP00000266542"/>
<dbReference type="PeptideAtlas" id="Q9NZP8"/>
<dbReference type="ProteomicsDB" id="83474"/>
<dbReference type="Pumba" id="Q9NZP8"/>
<dbReference type="Antibodypedia" id="1734">
    <property type="antibodies" value="115 antibodies from 21 providers"/>
</dbReference>
<dbReference type="DNASU" id="51279"/>
<dbReference type="Ensembl" id="ENST00000266542.9">
    <property type="protein sequence ID" value="ENSP00000266542.4"/>
    <property type="gene ID" value="ENSG00000139178.12"/>
</dbReference>
<dbReference type="Ensembl" id="ENST00000671752.1">
    <property type="protein sequence ID" value="ENSP00000500804.1"/>
    <property type="gene ID" value="ENSG00000288124.1"/>
</dbReference>
<dbReference type="GeneID" id="51279"/>
<dbReference type="KEGG" id="hsa:51279"/>
<dbReference type="MANE-Select" id="ENST00000266542.9">
    <property type="protein sequence ID" value="ENSP00000266542.4"/>
    <property type="RefSeq nucleotide sequence ID" value="NM_016546.4"/>
    <property type="RefSeq protein sequence ID" value="NP_057630.2"/>
</dbReference>
<dbReference type="UCSC" id="uc001qsn.4">
    <property type="organism name" value="human"/>
</dbReference>
<dbReference type="AGR" id="HGNC:21265"/>
<dbReference type="CTD" id="51279"/>
<dbReference type="DisGeNET" id="51279"/>
<dbReference type="GeneCards" id="C1RL"/>
<dbReference type="HGNC" id="HGNC:21265">
    <property type="gene designation" value="C1RL"/>
</dbReference>
<dbReference type="HPA" id="ENSG00000139178">
    <property type="expression patterns" value="Tissue enhanced (liver)"/>
</dbReference>
<dbReference type="MalaCards" id="C1RL"/>
<dbReference type="MIM" id="608974">
    <property type="type" value="gene"/>
</dbReference>
<dbReference type="neXtProt" id="NX_Q9NZP8"/>
<dbReference type="OpenTargets" id="ENSG00000139178"/>
<dbReference type="PharmGKB" id="PA134957759"/>
<dbReference type="VEuPathDB" id="HostDB:ENSG00000139178"/>
<dbReference type="eggNOG" id="KOG3627">
    <property type="taxonomic scope" value="Eukaryota"/>
</dbReference>
<dbReference type="GeneTree" id="ENSGT00940000162495"/>
<dbReference type="HOGENOM" id="CLU_006842_0_0_1"/>
<dbReference type="InParanoid" id="Q9NZP8"/>
<dbReference type="OMA" id="QHESHNF"/>
<dbReference type="OrthoDB" id="6261922at2759"/>
<dbReference type="PAN-GO" id="Q9NZP8">
    <property type="GO annotations" value="4 GO annotations based on evolutionary models"/>
</dbReference>
<dbReference type="PhylomeDB" id="Q9NZP8"/>
<dbReference type="TreeFam" id="TF330373"/>
<dbReference type="BRENDA" id="3.4.21.41">
    <property type="organism ID" value="2681"/>
</dbReference>
<dbReference type="PathwayCommons" id="Q9NZP8"/>
<dbReference type="SignaLink" id="Q9NZP8"/>
<dbReference type="SIGNOR" id="Q9NZP8"/>
<dbReference type="BioGRID-ORCS" id="51279">
    <property type="hits" value="7 hits in 1151 CRISPR screens"/>
</dbReference>
<dbReference type="ChiTaRS" id="C1RL">
    <property type="organism name" value="human"/>
</dbReference>
<dbReference type="GenomeRNAi" id="51279"/>
<dbReference type="Pharos" id="Q9NZP8">
    <property type="development level" value="Tbio"/>
</dbReference>
<dbReference type="PRO" id="PR:Q9NZP8"/>
<dbReference type="Proteomes" id="UP000005640">
    <property type="component" value="Chromosome 12"/>
</dbReference>
<dbReference type="RNAct" id="Q9NZP8">
    <property type="molecule type" value="protein"/>
</dbReference>
<dbReference type="Bgee" id="ENSG00000139178">
    <property type="expression patterns" value="Expressed in right lobe of liver and 99 other cell types or tissues"/>
</dbReference>
<dbReference type="ExpressionAtlas" id="Q9NZP8">
    <property type="expression patterns" value="baseline and differential"/>
</dbReference>
<dbReference type="GO" id="GO:0072562">
    <property type="term" value="C:blood microparticle"/>
    <property type="evidence" value="ECO:0000318"/>
    <property type="project" value="GO_Central"/>
</dbReference>
<dbReference type="GO" id="GO:0070062">
    <property type="term" value="C:extracellular exosome"/>
    <property type="evidence" value="ECO:0007005"/>
    <property type="project" value="UniProtKB"/>
</dbReference>
<dbReference type="GO" id="GO:0005615">
    <property type="term" value="C:extracellular space"/>
    <property type="evidence" value="ECO:0007005"/>
    <property type="project" value="UniProtKB"/>
</dbReference>
<dbReference type="GO" id="GO:0004252">
    <property type="term" value="F:serine-type endopeptidase activity"/>
    <property type="evidence" value="ECO:0000318"/>
    <property type="project" value="GO_Central"/>
</dbReference>
<dbReference type="GO" id="GO:0006958">
    <property type="term" value="P:complement activation, classical pathway"/>
    <property type="evidence" value="ECO:0007669"/>
    <property type="project" value="UniProtKB-KW"/>
</dbReference>
<dbReference type="GO" id="GO:0045087">
    <property type="term" value="P:innate immune response"/>
    <property type="evidence" value="ECO:0007669"/>
    <property type="project" value="UniProtKB-KW"/>
</dbReference>
<dbReference type="GO" id="GO:0031638">
    <property type="term" value="P:zymogen activation"/>
    <property type="evidence" value="ECO:0000318"/>
    <property type="project" value="GO_Central"/>
</dbReference>
<dbReference type="CDD" id="cd00041">
    <property type="entry name" value="CUB"/>
    <property type="match status" value="1"/>
</dbReference>
<dbReference type="CDD" id="cd00190">
    <property type="entry name" value="Tryp_SPc"/>
    <property type="match status" value="1"/>
</dbReference>
<dbReference type="FunFam" id="2.40.10.10:FF:000035">
    <property type="entry name" value="Complement C1r subcomponent"/>
    <property type="match status" value="1"/>
</dbReference>
<dbReference type="FunFam" id="2.40.10.10:FF:000037">
    <property type="entry name" value="Complement C1r subcomponent"/>
    <property type="match status" value="1"/>
</dbReference>
<dbReference type="FunFam" id="2.60.120.290:FF:000044">
    <property type="entry name" value="Complement C1r subcomponent like"/>
    <property type="match status" value="1"/>
</dbReference>
<dbReference type="Gene3D" id="2.10.70.10">
    <property type="entry name" value="Complement Module, domain 1"/>
    <property type="match status" value="1"/>
</dbReference>
<dbReference type="Gene3D" id="2.60.120.290">
    <property type="entry name" value="Spermadhesin, CUB domain"/>
    <property type="match status" value="1"/>
</dbReference>
<dbReference type="Gene3D" id="2.40.10.10">
    <property type="entry name" value="Trypsin-like serine proteases"/>
    <property type="match status" value="2"/>
</dbReference>
<dbReference type="InterPro" id="IPR000859">
    <property type="entry name" value="CUB_dom"/>
</dbReference>
<dbReference type="InterPro" id="IPR009003">
    <property type="entry name" value="Peptidase_S1_PA"/>
</dbReference>
<dbReference type="InterPro" id="IPR043504">
    <property type="entry name" value="Peptidase_S1_PA_chymotrypsin"/>
</dbReference>
<dbReference type="InterPro" id="IPR001314">
    <property type="entry name" value="Peptidase_S1A"/>
</dbReference>
<dbReference type="InterPro" id="IPR035914">
    <property type="entry name" value="Sperma_CUB_dom_sf"/>
</dbReference>
<dbReference type="InterPro" id="IPR035976">
    <property type="entry name" value="Sushi/SCR/CCP_sf"/>
</dbReference>
<dbReference type="InterPro" id="IPR001254">
    <property type="entry name" value="Trypsin_dom"/>
</dbReference>
<dbReference type="InterPro" id="IPR033116">
    <property type="entry name" value="TRYPSIN_SER"/>
</dbReference>
<dbReference type="PANTHER" id="PTHR24255:SF26">
    <property type="entry name" value="COMPLEMENT C1R SUBCOMPONENT-LIKE PROTEIN"/>
    <property type="match status" value="1"/>
</dbReference>
<dbReference type="PANTHER" id="PTHR24255">
    <property type="entry name" value="COMPLEMENT COMPONENT 1, S SUBCOMPONENT-RELATED"/>
    <property type="match status" value="1"/>
</dbReference>
<dbReference type="Pfam" id="PF00431">
    <property type="entry name" value="CUB"/>
    <property type="match status" value="1"/>
</dbReference>
<dbReference type="Pfam" id="PF00089">
    <property type="entry name" value="Trypsin"/>
    <property type="match status" value="1"/>
</dbReference>
<dbReference type="PRINTS" id="PR00722">
    <property type="entry name" value="CHYMOTRYPSIN"/>
</dbReference>
<dbReference type="SMART" id="SM00042">
    <property type="entry name" value="CUB"/>
    <property type="match status" value="1"/>
</dbReference>
<dbReference type="SMART" id="SM00020">
    <property type="entry name" value="Tryp_SPc"/>
    <property type="match status" value="1"/>
</dbReference>
<dbReference type="SUPFAM" id="SSF57535">
    <property type="entry name" value="Complement control module/SCR domain"/>
    <property type="match status" value="1"/>
</dbReference>
<dbReference type="SUPFAM" id="SSF49854">
    <property type="entry name" value="Spermadhesin, CUB domain"/>
    <property type="match status" value="1"/>
</dbReference>
<dbReference type="SUPFAM" id="SSF50494">
    <property type="entry name" value="Trypsin-like serine proteases"/>
    <property type="match status" value="1"/>
</dbReference>
<dbReference type="PROSITE" id="PS01180">
    <property type="entry name" value="CUB"/>
    <property type="match status" value="1"/>
</dbReference>
<dbReference type="PROSITE" id="PS50240">
    <property type="entry name" value="TRYPSIN_DOM"/>
    <property type="match status" value="1"/>
</dbReference>
<dbReference type="PROSITE" id="PS00135">
    <property type="entry name" value="TRYPSIN_SER"/>
    <property type="match status" value="1"/>
</dbReference>
<feature type="signal peptide" evidence="2">
    <location>
        <begin position="1"/>
        <end position="35"/>
    </location>
</feature>
<feature type="chain" id="PRO_0000318678" description="Complement C1r subcomponent-like protein">
    <location>
        <begin position="36"/>
        <end position="487"/>
    </location>
</feature>
<feature type="domain" description="CUB" evidence="3">
    <location>
        <begin position="39"/>
        <end position="163"/>
    </location>
</feature>
<feature type="domain" description="Sushi" evidence="5">
    <location>
        <begin position="165"/>
        <end position="230"/>
    </location>
</feature>
<feature type="domain" description="Peptidase S1" evidence="4">
    <location>
        <begin position="245"/>
        <end position="484"/>
    </location>
</feature>
<feature type="active site" description="Charge relay system" evidence="1">
    <location>
        <position position="283"/>
    </location>
</feature>
<feature type="active site" description="Charge relay system" evidence="1">
    <location>
        <position position="339"/>
    </location>
</feature>
<feature type="active site" description="Charge relay system" evidence="1">
    <location>
        <position position="436"/>
    </location>
</feature>
<feature type="glycosylation site" description="N-linked (GlcNAc...) asparagine" evidence="11">
    <location>
        <position position="147"/>
    </location>
</feature>
<feature type="glycosylation site" description="N-linked (GlcNAc...) asparagine" evidence="9">
    <location>
        <position position="166"/>
    </location>
</feature>
<feature type="glycosylation site" description="N-linked (GlcNAc...) (complex) asparagine" evidence="9 10 11">
    <location>
        <position position="242"/>
    </location>
</feature>
<feature type="glycosylation site" description="N-linked (GlcNAc...) asparagine" evidence="9 11">
    <location>
        <position position="296"/>
    </location>
</feature>
<feature type="glycosylation site" description="N-linked (GlcNAc...) asparagine" evidence="2">
    <location>
        <position position="363"/>
    </location>
</feature>
<feature type="disulfide bond" evidence="1">
    <location>
        <begin position="94"/>
        <end position="112"/>
    </location>
</feature>
<feature type="disulfide bond" evidence="5">
    <location>
        <begin position="195"/>
        <end position="228"/>
    </location>
</feature>
<feature type="disulfide bond" evidence="1">
    <location>
        <begin position="402"/>
        <end position="421"/>
    </location>
</feature>
<feature type="disulfide bond" evidence="1">
    <location>
        <begin position="432"/>
        <end position="462"/>
    </location>
</feature>
<feature type="sequence variant" id="VAR_038852" description="In dbSNP:rs3742089." evidence="6">
    <original>I</original>
    <variation>V</variation>
    <location>
        <position position="285"/>
    </location>
</feature>
<feature type="mutagenesis site" description="Unable to cleave HP." evidence="7">
    <original>S</original>
    <variation>A</variation>
    <location>
        <position position="436"/>
    </location>
</feature>
<feature type="sequence conflict" description="In Ref. 3; BAD96522." evidence="12" ref="3">
    <original>C</original>
    <variation>R</variation>
    <location>
        <position position="94"/>
    </location>
</feature>
<feature type="sequence conflict" description="In Ref. 3; BAD96522." evidence="12" ref="3">
    <original>V</original>
    <variation>A</variation>
    <location>
        <position position="99"/>
    </location>
</feature>
<feature type="sequence conflict" description="In Ref. 3; BAD96522." evidence="12" ref="3">
    <original>I</original>
    <variation>M</variation>
    <location>
        <position position="349"/>
    </location>
</feature>
<protein>
    <recommendedName>
        <fullName>Complement C1r subcomponent-like protein</fullName>
        <shortName>C1r-LP</shortName>
        <shortName>C1r-like protein</shortName>
        <ecNumber>3.4.21.-</ecNumber>
    </recommendedName>
    <alternativeName>
        <fullName>C1r-like serine protease analog protein</fullName>
        <shortName>CLSPa</shortName>
    </alternativeName>
</protein>
<proteinExistence type="evidence at protein level"/>
<comment type="function">
    <text evidence="6 7 8">Mediates the proteolytic cleavage of HP/haptoglobin in the endoplasmic reticulum.</text>
</comment>
<comment type="subcellular location">
    <subcellularLocation>
        <location evidence="6">Secreted</location>
    </subcellularLocation>
</comment>
<comment type="tissue specificity">
    <text evidence="6 8">Highly expressed in placenta, liver, kidney, pancreas, moderately in lung, spleen, prostate, ovary, colon, and PBL, and weakly in heart, skeletal muscle, thymus, testis, and small intestine. Expressed in PC-3 (prostate adenocarcinoma) and SK-OV-3 (ovary adenocarcinoma) cells, but not in LoVo and HT-29 (colon adenocarcinoma), SMMC7721 (hepatocellular carcinoma), CaoV-3 (ovary adenocarcinoma), HeLa (cervix epithelioid carcinoma), MCF-7 (breast adenocarcinoma), U-251MG (glioma) or A-549 (lung carcinoma) cells. Widely expressed in myeloid leukemia cell lines, including K-562 (chronic myelogenous leukemia), THP-1 (myelomonocytic leukemia), HL-60 and NB4 (promyelocytic leukemia), and KG-1 (acute myelogenous leukemia) cells. Expressed mainly in the liver and in serum (at protein level).</text>
</comment>
<comment type="induction">
    <text evidence="6">Up-regulated in monocytes and dendritic cells (DC) undergoing maturation or activation.</text>
</comment>
<comment type="similarity">
    <text evidence="4">Belongs to the peptidase S1 family.</text>
</comment>
<comment type="caution">
    <text evidence="12">Does not associate with the C1 complex. According to PubMed:15385675, doesn't cleave the proform of complement C1s.</text>
</comment>
<keyword id="KW-0180">Complement pathway</keyword>
<keyword id="KW-1015">Disulfide bond</keyword>
<keyword id="KW-0325">Glycoprotein</keyword>
<keyword id="KW-0378">Hydrolase</keyword>
<keyword id="KW-0391">Immunity</keyword>
<keyword id="KW-0399">Innate immunity</keyword>
<keyword id="KW-0645">Protease</keyword>
<keyword id="KW-1267">Proteomics identification</keyword>
<keyword id="KW-1185">Reference proteome</keyword>
<keyword id="KW-0964">Secreted</keyword>
<keyword id="KW-0720">Serine protease</keyword>
<keyword id="KW-0732">Signal</keyword>
<keyword id="KW-0768">Sushi</keyword>